<name>RS7_FRATT</name>
<sequence>MSRRNRAPKRDILPDPKYKSQVVAKFVNHIMLSGKKSIAEKIVYGAFDKIKAKDASANEVEVFEKALESVSPMVEVKSRRVGGATYQVPVEVRPERRQTLGMRWIIDAARKRKENTMGDRVAAEILEAVEGRGAAVKKREDTHKMAEANKAFAHFRW</sequence>
<dbReference type="EMBL" id="AJ749949">
    <property type="protein sequence ID" value="CAG44955.1"/>
    <property type="molecule type" value="Genomic_DNA"/>
</dbReference>
<dbReference type="RefSeq" id="WP_003021606.1">
    <property type="nucleotide sequence ID" value="NZ_CP010290.1"/>
</dbReference>
<dbReference type="RefSeq" id="YP_169371.1">
    <property type="nucleotide sequence ID" value="NC_006570.2"/>
</dbReference>
<dbReference type="SMR" id="Q5NHX1"/>
<dbReference type="STRING" id="177416.FTT_0322"/>
<dbReference type="DNASU" id="3191970"/>
<dbReference type="EnsemblBacteria" id="CAG44955">
    <property type="protein sequence ID" value="CAG44955"/>
    <property type="gene ID" value="FTT_0322"/>
</dbReference>
<dbReference type="GeneID" id="75264264"/>
<dbReference type="KEGG" id="ftu:FTT_0322"/>
<dbReference type="eggNOG" id="COG0049">
    <property type="taxonomic scope" value="Bacteria"/>
</dbReference>
<dbReference type="OrthoDB" id="9807653at2"/>
<dbReference type="Proteomes" id="UP000001174">
    <property type="component" value="Chromosome"/>
</dbReference>
<dbReference type="GO" id="GO:0015935">
    <property type="term" value="C:small ribosomal subunit"/>
    <property type="evidence" value="ECO:0007669"/>
    <property type="project" value="InterPro"/>
</dbReference>
<dbReference type="GO" id="GO:0019843">
    <property type="term" value="F:rRNA binding"/>
    <property type="evidence" value="ECO:0007669"/>
    <property type="project" value="UniProtKB-UniRule"/>
</dbReference>
<dbReference type="GO" id="GO:0003735">
    <property type="term" value="F:structural constituent of ribosome"/>
    <property type="evidence" value="ECO:0007669"/>
    <property type="project" value="InterPro"/>
</dbReference>
<dbReference type="GO" id="GO:0000049">
    <property type="term" value="F:tRNA binding"/>
    <property type="evidence" value="ECO:0007669"/>
    <property type="project" value="UniProtKB-UniRule"/>
</dbReference>
<dbReference type="GO" id="GO:0006412">
    <property type="term" value="P:translation"/>
    <property type="evidence" value="ECO:0007669"/>
    <property type="project" value="UniProtKB-UniRule"/>
</dbReference>
<dbReference type="CDD" id="cd14869">
    <property type="entry name" value="uS7_Bacteria"/>
    <property type="match status" value="1"/>
</dbReference>
<dbReference type="FunFam" id="1.10.455.10:FF:000001">
    <property type="entry name" value="30S ribosomal protein S7"/>
    <property type="match status" value="1"/>
</dbReference>
<dbReference type="Gene3D" id="1.10.455.10">
    <property type="entry name" value="Ribosomal protein S7 domain"/>
    <property type="match status" value="1"/>
</dbReference>
<dbReference type="HAMAP" id="MF_00480_B">
    <property type="entry name" value="Ribosomal_uS7_B"/>
    <property type="match status" value="1"/>
</dbReference>
<dbReference type="InterPro" id="IPR000235">
    <property type="entry name" value="Ribosomal_uS7"/>
</dbReference>
<dbReference type="InterPro" id="IPR005717">
    <property type="entry name" value="Ribosomal_uS7_bac/org-type"/>
</dbReference>
<dbReference type="InterPro" id="IPR020606">
    <property type="entry name" value="Ribosomal_uS7_CS"/>
</dbReference>
<dbReference type="InterPro" id="IPR023798">
    <property type="entry name" value="Ribosomal_uS7_dom"/>
</dbReference>
<dbReference type="InterPro" id="IPR036823">
    <property type="entry name" value="Ribosomal_uS7_dom_sf"/>
</dbReference>
<dbReference type="NCBIfam" id="TIGR01029">
    <property type="entry name" value="rpsG_bact"/>
    <property type="match status" value="1"/>
</dbReference>
<dbReference type="PANTHER" id="PTHR11205">
    <property type="entry name" value="RIBOSOMAL PROTEIN S7"/>
    <property type="match status" value="1"/>
</dbReference>
<dbReference type="Pfam" id="PF00177">
    <property type="entry name" value="Ribosomal_S7"/>
    <property type="match status" value="1"/>
</dbReference>
<dbReference type="PIRSF" id="PIRSF002122">
    <property type="entry name" value="RPS7p_RPS7a_RPS5e_RPS7o"/>
    <property type="match status" value="1"/>
</dbReference>
<dbReference type="SUPFAM" id="SSF47973">
    <property type="entry name" value="Ribosomal protein S7"/>
    <property type="match status" value="1"/>
</dbReference>
<dbReference type="PROSITE" id="PS00052">
    <property type="entry name" value="RIBOSOMAL_S7"/>
    <property type="match status" value="1"/>
</dbReference>
<proteinExistence type="inferred from homology"/>
<feature type="chain" id="PRO_0000124265" description="Small ribosomal subunit protein uS7">
    <location>
        <begin position="1"/>
        <end position="157"/>
    </location>
</feature>
<protein>
    <recommendedName>
        <fullName evidence="1">Small ribosomal subunit protein uS7</fullName>
    </recommendedName>
    <alternativeName>
        <fullName evidence="2">30S ribosomal protein S7</fullName>
    </alternativeName>
</protein>
<accession>Q5NHX1</accession>
<evidence type="ECO:0000255" key="1">
    <source>
        <dbReference type="HAMAP-Rule" id="MF_00480"/>
    </source>
</evidence>
<evidence type="ECO:0000305" key="2"/>
<keyword id="KW-1185">Reference proteome</keyword>
<keyword id="KW-0687">Ribonucleoprotein</keyword>
<keyword id="KW-0689">Ribosomal protein</keyword>
<keyword id="KW-0694">RNA-binding</keyword>
<keyword id="KW-0699">rRNA-binding</keyword>
<keyword id="KW-0820">tRNA-binding</keyword>
<reference key="1">
    <citation type="journal article" date="2005" name="Nat. Genet.">
        <title>The complete genome sequence of Francisella tularensis, the causative agent of tularemia.</title>
        <authorList>
            <person name="Larsson P."/>
            <person name="Oyston P.C.F."/>
            <person name="Chain P."/>
            <person name="Chu M.C."/>
            <person name="Duffield M."/>
            <person name="Fuxelius H.-H."/>
            <person name="Garcia E."/>
            <person name="Haelltorp G."/>
            <person name="Johansson D."/>
            <person name="Isherwood K.E."/>
            <person name="Karp P.D."/>
            <person name="Larsson E."/>
            <person name="Liu Y."/>
            <person name="Michell S."/>
            <person name="Prior J."/>
            <person name="Prior R."/>
            <person name="Malfatti S."/>
            <person name="Sjoestedt A."/>
            <person name="Svensson K."/>
            <person name="Thompson N."/>
            <person name="Vergez L."/>
            <person name="Wagg J.K."/>
            <person name="Wren B.W."/>
            <person name="Lindler L.E."/>
            <person name="Andersson S.G.E."/>
            <person name="Forsman M."/>
            <person name="Titball R.W."/>
        </authorList>
    </citation>
    <scope>NUCLEOTIDE SEQUENCE [LARGE SCALE GENOMIC DNA]</scope>
    <source>
        <strain>SCHU S4 / Schu 4</strain>
    </source>
</reference>
<gene>
    <name evidence="1" type="primary">rpsG</name>
    <name type="ordered locus">FTT_0322</name>
</gene>
<comment type="function">
    <text evidence="1">One of the primary rRNA binding proteins, it binds directly to 16S rRNA where it nucleates assembly of the head domain of the 30S subunit. Is located at the subunit interface close to the decoding center, probably blocks exit of the E-site tRNA.</text>
</comment>
<comment type="subunit">
    <text evidence="1">Part of the 30S ribosomal subunit. Contacts proteins S9 and S11.</text>
</comment>
<comment type="similarity">
    <text evidence="1">Belongs to the universal ribosomal protein uS7 family.</text>
</comment>
<organism>
    <name type="scientific">Francisella tularensis subsp. tularensis (strain SCHU S4 / Schu 4)</name>
    <dbReference type="NCBI Taxonomy" id="177416"/>
    <lineage>
        <taxon>Bacteria</taxon>
        <taxon>Pseudomonadati</taxon>
        <taxon>Pseudomonadota</taxon>
        <taxon>Gammaproteobacteria</taxon>
        <taxon>Thiotrichales</taxon>
        <taxon>Francisellaceae</taxon>
        <taxon>Francisella</taxon>
    </lineage>
</organism>